<accession>Q8KC49</accession>
<comment type="function">
    <text evidence="1">Responsible for the release of ribosomes from messenger RNA at the termination of protein biosynthesis. May increase the efficiency of translation by recycling ribosomes from one round of translation to another.</text>
</comment>
<comment type="subcellular location">
    <subcellularLocation>
        <location evidence="1">Cytoplasm</location>
    </subcellularLocation>
</comment>
<comment type="similarity">
    <text evidence="1">Belongs to the RRF family.</text>
</comment>
<organism>
    <name type="scientific">Chlorobaculum tepidum (strain ATCC 49652 / DSM 12025 / NBRC 103806 / TLS)</name>
    <name type="common">Chlorobium tepidum</name>
    <dbReference type="NCBI Taxonomy" id="194439"/>
    <lineage>
        <taxon>Bacteria</taxon>
        <taxon>Pseudomonadati</taxon>
        <taxon>Chlorobiota</taxon>
        <taxon>Chlorobiia</taxon>
        <taxon>Chlorobiales</taxon>
        <taxon>Chlorobiaceae</taxon>
        <taxon>Chlorobaculum</taxon>
    </lineage>
</organism>
<evidence type="ECO:0000255" key="1">
    <source>
        <dbReference type="HAMAP-Rule" id="MF_00040"/>
    </source>
</evidence>
<feature type="chain" id="PRO_0000167441" description="Ribosome-recycling factor">
    <location>
        <begin position="1"/>
        <end position="186"/>
    </location>
</feature>
<dbReference type="EMBL" id="AE006470">
    <property type="protein sequence ID" value="AAM72802.1"/>
    <property type="molecule type" value="Genomic_DNA"/>
</dbReference>
<dbReference type="RefSeq" id="NP_662460.1">
    <property type="nucleotide sequence ID" value="NC_002932.3"/>
</dbReference>
<dbReference type="RefSeq" id="WP_010933241.1">
    <property type="nucleotide sequence ID" value="NC_002932.3"/>
</dbReference>
<dbReference type="SMR" id="Q8KC49"/>
<dbReference type="STRING" id="194439.CT1577"/>
<dbReference type="EnsemblBacteria" id="AAM72802">
    <property type="protein sequence ID" value="AAM72802"/>
    <property type="gene ID" value="CT1577"/>
</dbReference>
<dbReference type="KEGG" id="cte:CT1577"/>
<dbReference type="PATRIC" id="fig|194439.7.peg.1428"/>
<dbReference type="eggNOG" id="COG0233">
    <property type="taxonomic scope" value="Bacteria"/>
</dbReference>
<dbReference type="HOGENOM" id="CLU_073981_2_0_10"/>
<dbReference type="OrthoDB" id="9804006at2"/>
<dbReference type="Proteomes" id="UP000001007">
    <property type="component" value="Chromosome"/>
</dbReference>
<dbReference type="GO" id="GO:0005737">
    <property type="term" value="C:cytoplasm"/>
    <property type="evidence" value="ECO:0007669"/>
    <property type="project" value="UniProtKB-SubCell"/>
</dbReference>
<dbReference type="GO" id="GO:0043023">
    <property type="term" value="F:ribosomal large subunit binding"/>
    <property type="evidence" value="ECO:0007669"/>
    <property type="project" value="TreeGrafter"/>
</dbReference>
<dbReference type="GO" id="GO:0006415">
    <property type="term" value="P:translational termination"/>
    <property type="evidence" value="ECO:0007669"/>
    <property type="project" value="UniProtKB-UniRule"/>
</dbReference>
<dbReference type="CDD" id="cd00520">
    <property type="entry name" value="RRF"/>
    <property type="match status" value="1"/>
</dbReference>
<dbReference type="FunFam" id="1.10.132.20:FF:000001">
    <property type="entry name" value="Ribosome-recycling factor"/>
    <property type="match status" value="1"/>
</dbReference>
<dbReference type="FunFam" id="3.30.1360.40:FF:000001">
    <property type="entry name" value="Ribosome-recycling factor"/>
    <property type="match status" value="1"/>
</dbReference>
<dbReference type="Gene3D" id="3.30.1360.40">
    <property type="match status" value="1"/>
</dbReference>
<dbReference type="Gene3D" id="1.10.132.20">
    <property type="entry name" value="Ribosome-recycling factor"/>
    <property type="match status" value="1"/>
</dbReference>
<dbReference type="HAMAP" id="MF_00040">
    <property type="entry name" value="RRF"/>
    <property type="match status" value="1"/>
</dbReference>
<dbReference type="InterPro" id="IPR002661">
    <property type="entry name" value="Ribosome_recyc_fac"/>
</dbReference>
<dbReference type="InterPro" id="IPR023584">
    <property type="entry name" value="Ribosome_recyc_fac_dom"/>
</dbReference>
<dbReference type="InterPro" id="IPR036191">
    <property type="entry name" value="RRF_sf"/>
</dbReference>
<dbReference type="NCBIfam" id="TIGR00496">
    <property type="entry name" value="frr"/>
    <property type="match status" value="1"/>
</dbReference>
<dbReference type="PANTHER" id="PTHR20982:SF3">
    <property type="entry name" value="MITOCHONDRIAL RIBOSOME RECYCLING FACTOR PSEUDO 1"/>
    <property type="match status" value="1"/>
</dbReference>
<dbReference type="PANTHER" id="PTHR20982">
    <property type="entry name" value="RIBOSOME RECYCLING FACTOR"/>
    <property type="match status" value="1"/>
</dbReference>
<dbReference type="Pfam" id="PF01765">
    <property type="entry name" value="RRF"/>
    <property type="match status" value="1"/>
</dbReference>
<dbReference type="SUPFAM" id="SSF55194">
    <property type="entry name" value="Ribosome recycling factor, RRF"/>
    <property type="match status" value="1"/>
</dbReference>
<keyword id="KW-0963">Cytoplasm</keyword>
<keyword id="KW-0648">Protein biosynthesis</keyword>
<keyword id="KW-1185">Reference proteome</keyword>
<proteinExistence type="inferred from homology"/>
<protein>
    <recommendedName>
        <fullName evidence="1">Ribosome-recycling factor</fullName>
        <shortName evidence="1">RRF</shortName>
    </recommendedName>
    <alternativeName>
        <fullName evidence="1">Ribosome-releasing factor</fullName>
    </alternativeName>
</protein>
<gene>
    <name evidence="1" type="primary">frr</name>
    <name type="ordered locus">CT1577</name>
</gene>
<name>RRF_CHLTE</name>
<sequence>MTVRDVIQKIEPRMKKTIEAFQHELASIRTGKATTALLDRVKVEAYGSQMPLKQVGNVGVLDAHTLTVQVWDKSMVGATERAIRDAGLGLNPSADGQNIRISIPPLTEERRKEFVKLTKKFGEDSKVSLRNHRRDLIHEVEKLEKEKLISEDELKRGKKDADDLLHKYEKQITELIAQKEKEIMEV</sequence>
<reference key="1">
    <citation type="journal article" date="2002" name="Proc. Natl. Acad. Sci. U.S.A.">
        <title>The complete genome sequence of Chlorobium tepidum TLS, a photosynthetic, anaerobic, green-sulfur bacterium.</title>
        <authorList>
            <person name="Eisen J.A."/>
            <person name="Nelson K.E."/>
            <person name="Paulsen I.T."/>
            <person name="Heidelberg J.F."/>
            <person name="Wu M."/>
            <person name="Dodson R.J."/>
            <person name="DeBoy R.T."/>
            <person name="Gwinn M.L."/>
            <person name="Nelson W.C."/>
            <person name="Haft D.H."/>
            <person name="Hickey E.K."/>
            <person name="Peterson J.D."/>
            <person name="Durkin A.S."/>
            <person name="Kolonay J.F."/>
            <person name="Yang F."/>
            <person name="Holt I.E."/>
            <person name="Umayam L.A."/>
            <person name="Mason T.M."/>
            <person name="Brenner M."/>
            <person name="Shea T.P."/>
            <person name="Parksey D.S."/>
            <person name="Nierman W.C."/>
            <person name="Feldblyum T.V."/>
            <person name="Hansen C.L."/>
            <person name="Craven M.B."/>
            <person name="Radune D."/>
            <person name="Vamathevan J.J."/>
            <person name="Khouri H.M."/>
            <person name="White O."/>
            <person name="Gruber T.M."/>
            <person name="Ketchum K.A."/>
            <person name="Venter J.C."/>
            <person name="Tettelin H."/>
            <person name="Bryant D.A."/>
            <person name="Fraser C.M."/>
        </authorList>
    </citation>
    <scope>NUCLEOTIDE SEQUENCE [LARGE SCALE GENOMIC DNA]</scope>
    <source>
        <strain>ATCC 49652 / DSM 12025 / NBRC 103806 / TLS</strain>
    </source>
</reference>